<keyword id="KW-1185">Reference proteome</keyword>
<comment type="similarity">
    <text evidence="1">Belongs to the UPF0763 family.</text>
</comment>
<evidence type="ECO:0000255" key="1">
    <source>
        <dbReference type="HAMAP-Rule" id="MF_02110"/>
    </source>
</evidence>
<protein>
    <recommendedName>
        <fullName evidence="1">UPF0763 protein Sdel_0383</fullName>
    </recommendedName>
</protein>
<sequence>MEFKRKKEFKMIEKISKGLSLNKQKEQTVLEILPHEDENSKLLRLKRGSWESQKEPWLVYDEKGKLHALLSIETLSKMIEHFKNAEKETLFLKLEKSILQHLPLDFHDVWTVAMEEIKKSKKSDMDFDALIKKIKTEHPNLFLDLKDLYLPEGASVISTIER</sequence>
<proteinExistence type="inferred from homology"/>
<dbReference type="EMBL" id="CP001816">
    <property type="protein sequence ID" value="ACZ11420.1"/>
    <property type="molecule type" value="Genomic_DNA"/>
</dbReference>
<dbReference type="STRING" id="525898.Sdel_0383"/>
<dbReference type="KEGG" id="sdl:Sdel_0383"/>
<dbReference type="eggNOG" id="ENOG5030YCA">
    <property type="taxonomic scope" value="Bacteria"/>
</dbReference>
<dbReference type="HOGENOM" id="CLU_120359_1_0_7"/>
<dbReference type="OrthoDB" id="5324700at2"/>
<dbReference type="Proteomes" id="UP000002222">
    <property type="component" value="Chromosome"/>
</dbReference>
<dbReference type="HAMAP" id="MF_02110">
    <property type="entry name" value="UPF0763"/>
    <property type="match status" value="1"/>
</dbReference>
<dbReference type="InterPro" id="IPR019724">
    <property type="entry name" value="UPF0763"/>
</dbReference>
<dbReference type="Pfam" id="PF10788">
    <property type="entry name" value="DUF2603"/>
    <property type="match status" value="1"/>
</dbReference>
<gene>
    <name type="ordered locus">Sdel_0383</name>
</gene>
<accession>D1AZF3</accession>
<name>Y383_SULD5</name>
<organism>
    <name type="scientific">Sulfurospirillum deleyianum (strain ATCC 51133 / DSM 6946 / 5175)</name>
    <dbReference type="NCBI Taxonomy" id="525898"/>
    <lineage>
        <taxon>Bacteria</taxon>
        <taxon>Pseudomonadati</taxon>
        <taxon>Campylobacterota</taxon>
        <taxon>Epsilonproteobacteria</taxon>
        <taxon>Campylobacterales</taxon>
        <taxon>Sulfurospirillaceae</taxon>
        <taxon>Sulfurospirillum</taxon>
    </lineage>
</organism>
<reference key="1">
    <citation type="submission" date="2009-11" db="EMBL/GenBank/DDBJ databases">
        <title>The complete genome of Sulfurospirillum deleyianum DSM 6946.</title>
        <authorList>
            <consortium name="US DOE Joint Genome Institute (JGI-PGF)"/>
            <person name="Lucas S."/>
            <person name="Copeland A."/>
            <person name="Lapidus A."/>
            <person name="Glavina del Rio T."/>
            <person name="Dalin E."/>
            <person name="Tice H."/>
            <person name="Bruce D."/>
            <person name="Goodwin L."/>
            <person name="Pitluck S."/>
            <person name="Kyrpides N."/>
            <person name="Mavromatis K."/>
            <person name="Ivanova N."/>
            <person name="Ovchinnikova G."/>
            <person name="Munk A.C."/>
            <person name="Lu M."/>
            <person name="Brettin T."/>
            <person name="Detter J.C."/>
            <person name="Han C."/>
            <person name="Tapia R."/>
            <person name="Larimer F."/>
            <person name="Land M."/>
            <person name="Hauser L."/>
            <person name="Markowitz V."/>
            <person name="Cheng J.F."/>
            <person name="Hugenholtz P."/>
            <person name="Woyke T."/>
            <person name="Wu D."/>
            <person name="Aumann P."/>
            <person name="Schneider S."/>
            <person name="Lang E."/>
            <person name="Spring S."/>
            <person name="Klenk H.P."/>
            <person name="Eisen J.A."/>
        </authorList>
    </citation>
    <scope>NUCLEOTIDE SEQUENCE [LARGE SCALE GENOMIC DNA]</scope>
    <source>
        <strain>ATCC 51133 / DSM 6946 / 5175</strain>
    </source>
</reference>
<feature type="chain" id="PRO_0000394795" description="UPF0763 protein Sdel_0383">
    <location>
        <begin position="1"/>
        <end position="162"/>
    </location>
</feature>